<gene>
    <name evidence="1" type="primary">dnaK</name>
    <name type="ordered locus">BT9727_4051</name>
</gene>
<feature type="chain" id="PRO_0000225935" description="Chaperone protein DnaK">
    <location>
        <begin position="1"/>
        <end position="611"/>
    </location>
</feature>
<feature type="region of interest" description="Disordered" evidence="2">
    <location>
        <begin position="577"/>
        <end position="598"/>
    </location>
</feature>
<feature type="compositionally biased region" description="Low complexity" evidence="2">
    <location>
        <begin position="577"/>
        <end position="592"/>
    </location>
</feature>
<feature type="modified residue" description="Phosphothreonine; by autocatalysis" evidence="1">
    <location>
        <position position="173"/>
    </location>
</feature>
<reference key="1">
    <citation type="journal article" date="2006" name="J. Bacteriol.">
        <title>Pathogenomic sequence analysis of Bacillus cereus and Bacillus thuringiensis isolates closely related to Bacillus anthracis.</title>
        <authorList>
            <person name="Han C.S."/>
            <person name="Xie G."/>
            <person name="Challacombe J.F."/>
            <person name="Altherr M.R."/>
            <person name="Bhotika S.S."/>
            <person name="Bruce D."/>
            <person name="Campbell C.S."/>
            <person name="Campbell M.L."/>
            <person name="Chen J."/>
            <person name="Chertkov O."/>
            <person name="Cleland C."/>
            <person name="Dimitrijevic M."/>
            <person name="Doggett N.A."/>
            <person name="Fawcett J.J."/>
            <person name="Glavina T."/>
            <person name="Goodwin L.A."/>
            <person name="Hill K.K."/>
            <person name="Hitchcock P."/>
            <person name="Jackson P.J."/>
            <person name="Keim P."/>
            <person name="Kewalramani A.R."/>
            <person name="Longmire J."/>
            <person name="Lucas S."/>
            <person name="Malfatti S."/>
            <person name="McMurry K."/>
            <person name="Meincke L.J."/>
            <person name="Misra M."/>
            <person name="Moseman B.L."/>
            <person name="Mundt M."/>
            <person name="Munk A.C."/>
            <person name="Okinaka R.T."/>
            <person name="Parson-Quintana B."/>
            <person name="Reilly L.P."/>
            <person name="Richardson P."/>
            <person name="Robinson D.L."/>
            <person name="Rubin E."/>
            <person name="Saunders E."/>
            <person name="Tapia R."/>
            <person name="Tesmer J.G."/>
            <person name="Thayer N."/>
            <person name="Thompson L.S."/>
            <person name="Tice H."/>
            <person name="Ticknor L.O."/>
            <person name="Wills P.L."/>
            <person name="Brettin T.S."/>
            <person name="Gilna P."/>
        </authorList>
    </citation>
    <scope>NUCLEOTIDE SEQUENCE [LARGE SCALE GENOMIC DNA]</scope>
    <source>
        <strain>97-27</strain>
    </source>
</reference>
<keyword id="KW-0067">ATP-binding</keyword>
<keyword id="KW-0143">Chaperone</keyword>
<keyword id="KW-0547">Nucleotide-binding</keyword>
<keyword id="KW-0597">Phosphoprotein</keyword>
<keyword id="KW-0346">Stress response</keyword>
<protein>
    <recommendedName>
        <fullName evidence="1">Chaperone protein DnaK</fullName>
    </recommendedName>
    <alternativeName>
        <fullName evidence="1">HSP70</fullName>
    </alternativeName>
    <alternativeName>
        <fullName evidence="1">Heat shock 70 kDa protein</fullName>
    </alternativeName>
    <alternativeName>
        <fullName evidence="1">Heat shock protein 70</fullName>
    </alternativeName>
</protein>
<comment type="function">
    <text evidence="1">Acts as a chaperone.</text>
</comment>
<comment type="induction">
    <text evidence="1">By stress conditions e.g. heat shock.</text>
</comment>
<comment type="similarity">
    <text evidence="1">Belongs to the heat shock protein 70 family.</text>
</comment>
<dbReference type="EMBL" id="AE017355">
    <property type="protein sequence ID" value="AAT63524.1"/>
    <property type="molecule type" value="Genomic_DNA"/>
</dbReference>
<dbReference type="RefSeq" id="WP_000034699.1">
    <property type="nucleotide sequence ID" value="NC_005957.1"/>
</dbReference>
<dbReference type="RefSeq" id="YP_038369.1">
    <property type="nucleotide sequence ID" value="NC_005957.1"/>
</dbReference>
<dbReference type="SMR" id="Q6HDK7"/>
<dbReference type="GeneID" id="45024191"/>
<dbReference type="KEGG" id="btk:BT9727_4051"/>
<dbReference type="PATRIC" id="fig|281309.8.peg.4323"/>
<dbReference type="HOGENOM" id="CLU_005965_2_4_9"/>
<dbReference type="Proteomes" id="UP000001301">
    <property type="component" value="Chromosome"/>
</dbReference>
<dbReference type="GO" id="GO:0005524">
    <property type="term" value="F:ATP binding"/>
    <property type="evidence" value="ECO:0007669"/>
    <property type="project" value="UniProtKB-UniRule"/>
</dbReference>
<dbReference type="GO" id="GO:0140662">
    <property type="term" value="F:ATP-dependent protein folding chaperone"/>
    <property type="evidence" value="ECO:0007669"/>
    <property type="project" value="InterPro"/>
</dbReference>
<dbReference type="GO" id="GO:0051082">
    <property type="term" value="F:unfolded protein binding"/>
    <property type="evidence" value="ECO:0007669"/>
    <property type="project" value="InterPro"/>
</dbReference>
<dbReference type="CDD" id="cd10234">
    <property type="entry name" value="ASKHA_NBD_HSP70_DnaK-like"/>
    <property type="match status" value="1"/>
</dbReference>
<dbReference type="FunFam" id="2.60.34.10:FF:000014">
    <property type="entry name" value="Chaperone protein DnaK HSP70"/>
    <property type="match status" value="1"/>
</dbReference>
<dbReference type="FunFam" id="1.20.1270.10:FF:000004">
    <property type="entry name" value="Molecular chaperone DnaK"/>
    <property type="match status" value="1"/>
</dbReference>
<dbReference type="FunFam" id="3.30.420.40:FF:000071">
    <property type="entry name" value="Molecular chaperone DnaK"/>
    <property type="match status" value="1"/>
</dbReference>
<dbReference type="FunFam" id="3.90.640.10:FF:000003">
    <property type="entry name" value="Molecular chaperone DnaK"/>
    <property type="match status" value="1"/>
</dbReference>
<dbReference type="Gene3D" id="1.20.1270.10">
    <property type="match status" value="1"/>
</dbReference>
<dbReference type="Gene3D" id="3.30.420.40">
    <property type="match status" value="2"/>
</dbReference>
<dbReference type="Gene3D" id="3.90.640.10">
    <property type="entry name" value="Actin, Chain A, domain 4"/>
    <property type="match status" value="1"/>
</dbReference>
<dbReference type="Gene3D" id="2.60.34.10">
    <property type="entry name" value="Substrate Binding Domain Of DNAk, Chain A, domain 1"/>
    <property type="match status" value="1"/>
</dbReference>
<dbReference type="HAMAP" id="MF_00332">
    <property type="entry name" value="DnaK"/>
    <property type="match status" value="1"/>
</dbReference>
<dbReference type="InterPro" id="IPR043129">
    <property type="entry name" value="ATPase_NBD"/>
</dbReference>
<dbReference type="InterPro" id="IPR012725">
    <property type="entry name" value="Chaperone_DnaK"/>
</dbReference>
<dbReference type="InterPro" id="IPR018181">
    <property type="entry name" value="Heat_shock_70_CS"/>
</dbReference>
<dbReference type="InterPro" id="IPR029048">
    <property type="entry name" value="HSP70_C_sf"/>
</dbReference>
<dbReference type="InterPro" id="IPR029047">
    <property type="entry name" value="HSP70_peptide-bd_sf"/>
</dbReference>
<dbReference type="InterPro" id="IPR013126">
    <property type="entry name" value="Hsp_70_fam"/>
</dbReference>
<dbReference type="NCBIfam" id="NF001413">
    <property type="entry name" value="PRK00290.1"/>
    <property type="match status" value="1"/>
</dbReference>
<dbReference type="NCBIfam" id="TIGR02350">
    <property type="entry name" value="prok_dnaK"/>
    <property type="match status" value="1"/>
</dbReference>
<dbReference type="PANTHER" id="PTHR19375">
    <property type="entry name" value="HEAT SHOCK PROTEIN 70KDA"/>
    <property type="match status" value="1"/>
</dbReference>
<dbReference type="Pfam" id="PF00012">
    <property type="entry name" value="HSP70"/>
    <property type="match status" value="1"/>
</dbReference>
<dbReference type="PRINTS" id="PR00301">
    <property type="entry name" value="HEATSHOCK70"/>
</dbReference>
<dbReference type="SUPFAM" id="SSF53067">
    <property type="entry name" value="Actin-like ATPase domain"/>
    <property type="match status" value="2"/>
</dbReference>
<dbReference type="SUPFAM" id="SSF100934">
    <property type="entry name" value="Heat shock protein 70kD (HSP70), C-terminal subdomain"/>
    <property type="match status" value="1"/>
</dbReference>
<dbReference type="SUPFAM" id="SSF100920">
    <property type="entry name" value="Heat shock protein 70kD (HSP70), peptide-binding domain"/>
    <property type="match status" value="1"/>
</dbReference>
<dbReference type="PROSITE" id="PS00297">
    <property type="entry name" value="HSP70_1"/>
    <property type="match status" value="1"/>
</dbReference>
<dbReference type="PROSITE" id="PS00329">
    <property type="entry name" value="HSP70_2"/>
    <property type="match status" value="1"/>
</dbReference>
<dbReference type="PROSITE" id="PS01036">
    <property type="entry name" value="HSP70_3"/>
    <property type="match status" value="1"/>
</dbReference>
<sequence length="611" mass="65767">MSKIIGIDLGTTNSCVAVMEGGEPKVIPNPEGNRTTPSVVAFKNEERQVGEVAKRQAITNPNTIMSVKRHMGTDYKVEVEGKDYTPQEISAIILQNLKASAEAYLGETVTKAVITVPAYFNDAERQATKDAGRIAGLEVERIINEPTAAALAYGLEKQDEEQKILVYDLGGGTFDVSILELADGTFEVISTAGDNRLGGDDFDQVIIDHLVAEFKKENNIDLSQDKMALQRLKDAAEKAKKDLSGVTQTQISLPFISAGAAGPLHLELTLTRAKFEELSAGLVERTLEPTRRALKDAGFAPSELDKVILVGGSTRIPAVQEAIKRETGKEPYKGVNPDEVVALGAAVQGGVLTGDVEGVLLLDVTPLSLGIETMGGVFTKLIERNTTIPTSKSQVFSTAADNQPAVDIHVLQGERPMSADNKTLGRFQLTDLPPAPRGIPQIEVTFDIDANGIVNVRAKDLGTSKEQAITIQSSSGLSDEEVERMVQEAEANADADQKRKEEVELRNEADQLVFQTDKVVKDLEGKVDAAEVAKATEAKEALQAAIEKNELEEIRAKKDALQEIVQQLTVKLYEQAQAAAGQAEGAEGAQDAGAKKDNVVDAEFEEVKEDK</sequence>
<accession>Q6HDK7</accession>
<evidence type="ECO:0000255" key="1">
    <source>
        <dbReference type="HAMAP-Rule" id="MF_00332"/>
    </source>
</evidence>
<evidence type="ECO:0000256" key="2">
    <source>
        <dbReference type="SAM" id="MobiDB-lite"/>
    </source>
</evidence>
<name>DNAK_BACHK</name>
<proteinExistence type="inferred from homology"/>
<organism>
    <name type="scientific">Bacillus thuringiensis subsp. konkukian (strain 97-27)</name>
    <dbReference type="NCBI Taxonomy" id="281309"/>
    <lineage>
        <taxon>Bacteria</taxon>
        <taxon>Bacillati</taxon>
        <taxon>Bacillota</taxon>
        <taxon>Bacilli</taxon>
        <taxon>Bacillales</taxon>
        <taxon>Bacillaceae</taxon>
        <taxon>Bacillus</taxon>
        <taxon>Bacillus cereus group</taxon>
    </lineage>
</organism>